<evidence type="ECO:0000250" key="1"/>
<evidence type="ECO:0000255" key="2">
    <source>
        <dbReference type="HAMAP-Rule" id="MF_01931"/>
    </source>
</evidence>
<sequence length="493" mass="53809">MIPTQPLTADLDCDLGLERPDRPEEACGVFALYAPGEEVARMAYFGLYALQHRGQESAGIAVFEGDRVMLHKDMGLVSQVFDPEILQQLQGSLAVGHTRYSTTGSSRIANAQPALLETRLGPVALAHNGNLVNTVELRQELLAKNHELTTTTDSELIAFAIMEAVAEGQDWRGAIESACRRSQGAFSLTIGTPEALYGTRDPNGIRPLVLGTLESNGQTRYVLSSETCGLDIIGADYVRDIAPGEMVRITDAGLESWTWAEAPQPKLCVFEMIYFARPDSLFHGESLYSYRRRIGQRLAKEAPADVDLVLGVPDSGIPAAIGFSEALGIPYAEGLIKNRYVGRTFIQPTQSMRETGIRMKLNPLKDVLAGKRIAIIDDSIVRGTTSRKLVKALRDAGATEVHMRISSPPVTHPCFYGIDTDTQDQLIAATRSVSEITEQIGVDSLAYLTEQGMLEATRESIGNFCTACFNGRYPIAIPEEIKRSKLMLETVTA</sequence>
<dbReference type="EC" id="2.4.2.14" evidence="2"/>
<dbReference type="EMBL" id="U33211">
    <property type="protein sequence ID" value="AAA75107.1"/>
    <property type="molecule type" value="Genomic_DNA"/>
</dbReference>
<dbReference type="EMBL" id="CP000100">
    <property type="protein sequence ID" value="ABB56036.1"/>
    <property type="molecule type" value="Genomic_DNA"/>
</dbReference>
<dbReference type="PIR" id="S77612">
    <property type="entry name" value="S77612"/>
</dbReference>
<dbReference type="RefSeq" id="WP_011243803.1">
    <property type="nucleotide sequence ID" value="NZ_JACJTX010000002.1"/>
</dbReference>
<dbReference type="SMR" id="Q55038"/>
<dbReference type="STRING" id="1140.Synpcc7942_0004"/>
<dbReference type="MEROPS" id="C44.001"/>
<dbReference type="PaxDb" id="1140-Synpcc7942_0004"/>
<dbReference type="GeneID" id="72428812"/>
<dbReference type="KEGG" id="syf:Synpcc7942_0004"/>
<dbReference type="eggNOG" id="COG0034">
    <property type="taxonomic scope" value="Bacteria"/>
</dbReference>
<dbReference type="HOGENOM" id="CLU_022389_3_1_3"/>
<dbReference type="OrthoDB" id="9801213at2"/>
<dbReference type="BioCyc" id="SYNEL:SYNPCC7942_0004-MONOMER"/>
<dbReference type="UniPathway" id="UPA00074">
    <property type="reaction ID" value="UER00124"/>
</dbReference>
<dbReference type="Proteomes" id="UP000889800">
    <property type="component" value="Chromosome"/>
</dbReference>
<dbReference type="GO" id="GO:0051539">
    <property type="term" value="F:4 iron, 4 sulfur cluster binding"/>
    <property type="evidence" value="ECO:0007669"/>
    <property type="project" value="UniProtKB-KW"/>
</dbReference>
<dbReference type="GO" id="GO:0004044">
    <property type="term" value="F:amidophosphoribosyltransferase activity"/>
    <property type="evidence" value="ECO:0007669"/>
    <property type="project" value="UniProtKB-UniRule"/>
</dbReference>
<dbReference type="GO" id="GO:0000287">
    <property type="term" value="F:magnesium ion binding"/>
    <property type="evidence" value="ECO:0007669"/>
    <property type="project" value="UniProtKB-UniRule"/>
</dbReference>
<dbReference type="GO" id="GO:0006189">
    <property type="term" value="P:'de novo' IMP biosynthetic process"/>
    <property type="evidence" value="ECO:0007669"/>
    <property type="project" value="UniProtKB-UniRule"/>
</dbReference>
<dbReference type="GO" id="GO:0009113">
    <property type="term" value="P:purine nucleobase biosynthetic process"/>
    <property type="evidence" value="ECO:0007669"/>
    <property type="project" value="InterPro"/>
</dbReference>
<dbReference type="CDD" id="cd00715">
    <property type="entry name" value="GPATase_N"/>
    <property type="match status" value="1"/>
</dbReference>
<dbReference type="CDD" id="cd06223">
    <property type="entry name" value="PRTases_typeI"/>
    <property type="match status" value="1"/>
</dbReference>
<dbReference type="Gene3D" id="3.40.50.2020">
    <property type="match status" value="1"/>
</dbReference>
<dbReference type="Gene3D" id="3.60.20.10">
    <property type="entry name" value="Glutamine Phosphoribosylpyrophosphate, subunit 1, domain 1"/>
    <property type="match status" value="1"/>
</dbReference>
<dbReference type="HAMAP" id="MF_01931">
    <property type="entry name" value="PurF"/>
    <property type="match status" value="1"/>
</dbReference>
<dbReference type="InterPro" id="IPR017932">
    <property type="entry name" value="GATase_2_dom"/>
</dbReference>
<dbReference type="InterPro" id="IPR029055">
    <property type="entry name" value="Ntn_hydrolases_N"/>
</dbReference>
<dbReference type="InterPro" id="IPR000836">
    <property type="entry name" value="PRibTrfase_dom"/>
</dbReference>
<dbReference type="InterPro" id="IPR029057">
    <property type="entry name" value="PRTase-like"/>
</dbReference>
<dbReference type="InterPro" id="IPR005854">
    <property type="entry name" value="PurF"/>
</dbReference>
<dbReference type="InterPro" id="IPR035584">
    <property type="entry name" value="PurF_N"/>
</dbReference>
<dbReference type="NCBIfam" id="TIGR01134">
    <property type="entry name" value="purF"/>
    <property type="match status" value="1"/>
</dbReference>
<dbReference type="PANTHER" id="PTHR11907">
    <property type="entry name" value="AMIDOPHOSPHORIBOSYLTRANSFERASE"/>
    <property type="match status" value="1"/>
</dbReference>
<dbReference type="Pfam" id="PF13522">
    <property type="entry name" value="GATase_6"/>
    <property type="match status" value="1"/>
</dbReference>
<dbReference type="Pfam" id="PF00156">
    <property type="entry name" value="Pribosyltran"/>
    <property type="match status" value="1"/>
</dbReference>
<dbReference type="PIRSF" id="PIRSF000485">
    <property type="entry name" value="Amd_phspho_trans"/>
    <property type="match status" value="1"/>
</dbReference>
<dbReference type="SUPFAM" id="SSF56235">
    <property type="entry name" value="N-terminal nucleophile aminohydrolases (Ntn hydrolases)"/>
    <property type="match status" value="1"/>
</dbReference>
<dbReference type="SUPFAM" id="SSF53271">
    <property type="entry name" value="PRTase-like"/>
    <property type="match status" value="1"/>
</dbReference>
<dbReference type="PROSITE" id="PS51278">
    <property type="entry name" value="GATASE_TYPE_2"/>
    <property type="match status" value="1"/>
</dbReference>
<gene>
    <name evidence="2" type="primary">purF</name>
    <name type="ordered locus">Synpcc7942_0004</name>
</gene>
<proteinExistence type="inferred from homology"/>
<keyword id="KW-0004">4Fe-4S</keyword>
<keyword id="KW-0315">Glutamine amidotransferase</keyword>
<keyword id="KW-0328">Glycosyltransferase</keyword>
<keyword id="KW-0408">Iron</keyword>
<keyword id="KW-0411">Iron-sulfur</keyword>
<keyword id="KW-0460">Magnesium</keyword>
<keyword id="KW-0479">Metal-binding</keyword>
<keyword id="KW-0658">Purine biosynthesis</keyword>
<keyword id="KW-1185">Reference proteome</keyword>
<keyword id="KW-0808">Transferase</keyword>
<accession>Q55038</accession>
<accession>Q31SD3</accession>
<feature type="propeptide" id="PRO_0000029271" evidence="1">
    <location>
        <begin position="1"/>
        <end position="26"/>
    </location>
</feature>
<feature type="chain" id="PRO_0000029272" description="Amidophosphoribosyltransferase">
    <location>
        <begin position="27"/>
        <end position="493"/>
    </location>
</feature>
<feature type="domain" description="Glutamine amidotransferase type-2" evidence="2">
    <location>
        <begin position="27"/>
        <end position="252"/>
    </location>
</feature>
<feature type="active site" description="Nucleophile" evidence="2">
    <location>
        <position position="27"/>
    </location>
</feature>
<feature type="binding site" evidence="2">
    <location>
        <position position="268"/>
    </location>
    <ligand>
        <name>[4Fe-4S] cluster</name>
        <dbReference type="ChEBI" id="CHEBI:49883"/>
    </ligand>
</feature>
<feature type="binding site" evidence="2">
    <location>
        <position position="315"/>
    </location>
    <ligand>
        <name>Mg(2+)</name>
        <dbReference type="ChEBI" id="CHEBI:18420"/>
    </ligand>
</feature>
<feature type="binding site" evidence="2">
    <location>
        <position position="377"/>
    </location>
    <ligand>
        <name>Mg(2+)</name>
        <dbReference type="ChEBI" id="CHEBI:18420"/>
    </ligand>
</feature>
<feature type="binding site" evidence="2">
    <location>
        <position position="378"/>
    </location>
    <ligand>
        <name>Mg(2+)</name>
        <dbReference type="ChEBI" id="CHEBI:18420"/>
    </ligand>
</feature>
<feature type="binding site" evidence="2">
    <location>
        <position position="414"/>
    </location>
    <ligand>
        <name>[4Fe-4S] cluster</name>
        <dbReference type="ChEBI" id="CHEBI:49883"/>
    </ligand>
</feature>
<feature type="binding site" evidence="2">
    <location>
        <position position="465"/>
    </location>
    <ligand>
        <name>[4Fe-4S] cluster</name>
        <dbReference type="ChEBI" id="CHEBI:49883"/>
    </ligand>
</feature>
<feature type="binding site" evidence="2">
    <location>
        <position position="468"/>
    </location>
    <ligand>
        <name>[4Fe-4S] cluster</name>
        <dbReference type="ChEBI" id="CHEBI:49883"/>
    </ligand>
</feature>
<reference key="1">
    <citation type="journal article" date="1996" name="Mol. Microbiol.">
        <title>Circadian expression of genes involved in the purine biosynthetic pathway of the cyanobacterium Synechococcus sp. strain PCC 7942.</title>
        <authorList>
            <person name="Liu Y."/>
            <person name="Tsinoremas N.F."/>
            <person name="Golden S.S."/>
            <person name="Kondo T."/>
            <person name="Johnson C.H."/>
        </authorList>
    </citation>
    <scope>NUCLEOTIDE SEQUENCE [GENOMIC DNA]</scope>
</reference>
<reference key="2">
    <citation type="submission" date="2005-08" db="EMBL/GenBank/DDBJ databases">
        <title>Complete sequence of chromosome 1 of Synechococcus elongatus PCC 7942.</title>
        <authorList>
            <consortium name="US DOE Joint Genome Institute"/>
            <person name="Copeland A."/>
            <person name="Lucas S."/>
            <person name="Lapidus A."/>
            <person name="Barry K."/>
            <person name="Detter J.C."/>
            <person name="Glavina T."/>
            <person name="Hammon N."/>
            <person name="Israni S."/>
            <person name="Pitluck S."/>
            <person name="Schmutz J."/>
            <person name="Larimer F."/>
            <person name="Land M."/>
            <person name="Kyrpides N."/>
            <person name="Lykidis A."/>
            <person name="Golden S."/>
            <person name="Richardson P."/>
        </authorList>
    </citation>
    <scope>NUCLEOTIDE SEQUENCE [LARGE SCALE GENOMIC DNA]</scope>
    <source>
        <strain>ATCC 33912 / PCC 7942 / FACHB-805</strain>
    </source>
</reference>
<comment type="function">
    <text evidence="2">Catalyzes the formation of phosphoribosylamine from phosphoribosylpyrophosphate (PRPP) and glutamine.</text>
</comment>
<comment type="catalytic activity">
    <reaction evidence="2">
        <text>5-phospho-beta-D-ribosylamine + L-glutamate + diphosphate = 5-phospho-alpha-D-ribose 1-diphosphate + L-glutamine + H2O</text>
        <dbReference type="Rhea" id="RHEA:14905"/>
        <dbReference type="ChEBI" id="CHEBI:15377"/>
        <dbReference type="ChEBI" id="CHEBI:29985"/>
        <dbReference type="ChEBI" id="CHEBI:33019"/>
        <dbReference type="ChEBI" id="CHEBI:58017"/>
        <dbReference type="ChEBI" id="CHEBI:58359"/>
        <dbReference type="ChEBI" id="CHEBI:58681"/>
        <dbReference type="EC" id="2.4.2.14"/>
    </reaction>
</comment>
<comment type="cofactor">
    <cofactor evidence="2">
        <name>Mg(2+)</name>
        <dbReference type="ChEBI" id="CHEBI:18420"/>
    </cofactor>
    <text evidence="2">Binds 1 Mg(2+) ion per subunit.</text>
</comment>
<comment type="cofactor">
    <cofactor evidence="2">
        <name>[4Fe-4S] cluster</name>
        <dbReference type="ChEBI" id="CHEBI:49883"/>
    </cofactor>
    <text evidence="2">Binds 1 [4Fe-4S] cluster per subunit.</text>
</comment>
<comment type="pathway">
    <text evidence="2">Purine metabolism; IMP biosynthesis via de novo pathway; N(1)-(5-phospho-D-ribosyl)glycinamide from 5-phospho-alpha-D-ribose 1-diphosphate: step 1/2.</text>
</comment>
<comment type="similarity">
    <text evidence="2">In the C-terminal section; belongs to the purine/pyrimidine phosphoribosyltransferase family.</text>
</comment>
<name>PUR1_SYNE7</name>
<organism>
    <name type="scientific">Synechococcus elongatus (strain ATCC 33912 / PCC 7942 / FACHB-805)</name>
    <name type="common">Anacystis nidulans R2</name>
    <dbReference type="NCBI Taxonomy" id="1140"/>
    <lineage>
        <taxon>Bacteria</taxon>
        <taxon>Bacillati</taxon>
        <taxon>Cyanobacteriota</taxon>
        <taxon>Cyanophyceae</taxon>
        <taxon>Synechococcales</taxon>
        <taxon>Synechococcaceae</taxon>
        <taxon>Synechococcus</taxon>
    </lineage>
</organism>
<protein>
    <recommendedName>
        <fullName evidence="2">Amidophosphoribosyltransferase</fullName>
        <shortName evidence="2">ATase</shortName>
        <ecNumber evidence="2">2.4.2.14</ecNumber>
    </recommendedName>
    <alternativeName>
        <fullName evidence="2">Glutamine phosphoribosylpyrophosphate amidotransferase</fullName>
        <shortName evidence="2">GPATase</shortName>
    </alternativeName>
</protein>